<protein>
    <recommendedName>
        <fullName>Profilin</fullName>
    </recommendedName>
    <alternativeName>
        <fullName>Pollen allergen Cyn d 12</fullName>
    </alternativeName>
    <allergenName>Cyn d 12</allergenName>
</protein>
<accession>O04725</accession>
<organism>
    <name type="scientific">Cynodon dactylon</name>
    <name type="common">Bermuda grass</name>
    <name type="synonym">Panicum dactylon</name>
    <dbReference type="NCBI Taxonomy" id="28909"/>
    <lineage>
        <taxon>Eukaryota</taxon>
        <taxon>Viridiplantae</taxon>
        <taxon>Streptophyta</taxon>
        <taxon>Embryophyta</taxon>
        <taxon>Tracheophyta</taxon>
        <taxon>Spermatophyta</taxon>
        <taxon>Magnoliopsida</taxon>
        <taxon>Liliopsida</taxon>
        <taxon>Poales</taxon>
        <taxon>Poaceae</taxon>
        <taxon>PACMAD clade</taxon>
        <taxon>Chloridoideae</taxon>
        <taxon>Cynodonteae</taxon>
        <taxon>Eleusininae</taxon>
        <taxon>Cynodon</taxon>
    </lineage>
</organism>
<name>PROF_CYNDA</name>
<feature type="initiator methionine" description="Removed" evidence="1">
    <location>
        <position position="1"/>
    </location>
</feature>
<feature type="chain" id="PRO_0000199629" description="Profilin">
    <location>
        <begin position="2"/>
        <end position="131"/>
    </location>
</feature>
<sequence>MSWQAYVDDHLMCEIEGHHLTSAAIIGHDGTVWAQSAAFPAFKPEEMANIMKDFDEPGFLAPTGLFLGPTKYMVIQGEPGAVIRGKKGSGGVTVKKTGQALVIGIYDEPMTPGQCNMVIEKLGDYLIEQGM</sequence>
<gene>
    <name type="primary">PRO1</name>
</gene>
<gene>
    <name type="primary">PRO2</name>
</gene>
<reference key="1">
    <citation type="journal article" date="1997" name="Clin. Exp. Allergy">
        <title>Cloning and high level expression of Cynodon dactylon (Bermuda grass) pollen profilin (Cyn d 12) in Escherichia coli: purification and characterization of the allergen.</title>
        <authorList>
            <person name="Asturias J.A."/>
            <person name="Arilla M.C."/>
            <person name="Gomez-Bayon N."/>
            <person name="Martinez J."/>
            <person name="Martinez A."/>
            <person name="Palacios R."/>
        </authorList>
    </citation>
    <scope>NUCLEOTIDE SEQUENCE [MRNA]</scope>
    <scope>ALLERGEN</scope>
    <source>
        <tissue>Pollen</tissue>
    </source>
</reference>
<keyword id="KW-0009">Actin-binding</keyword>
<keyword id="KW-0020">Allergen</keyword>
<keyword id="KW-0963">Cytoplasm</keyword>
<keyword id="KW-0206">Cytoskeleton</keyword>
<proteinExistence type="evidence at protein level"/>
<evidence type="ECO:0000250" key="1"/>
<evidence type="ECO:0000269" key="2">
    <source>
    </source>
</evidence>
<evidence type="ECO:0000305" key="3"/>
<dbReference type="EMBL" id="Y08390">
    <property type="protein sequence ID" value="CAA69670.1"/>
    <property type="molecule type" value="mRNA"/>
</dbReference>
<dbReference type="EMBL" id="Y08389">
    <property type="protein sequence ID" value="CAA69669.1"/>
    <property type="molecule type" value="mRNA"/>
</dbReference>
<dbReference type="SMR" id="O04725"/>
<dbReference type="Allergome" id="279">
    <property type="allergen name" value="Cyn d 12"/>
</dbReference>
<dbReference type="Allergome" id="3233">
    <property type="allergen name" value="Cyn d 12.0101"/>
</dbReference>
<dbReference type="GO" id="GO:0005938">
    <property type="term" value="C:cell cortex"/>
    <property type="evidence" value="ECO:0007669"/>
    <property type="project" value="TreeGrafter"/>
</dbReference>
<dbReference type="GO" id="GO:0005856">
    <property type="term" value="C:cytoskeleton"/>
    <property type="evidence" value="ECO:0007669"/>
    <property type="project" value="UniProtKB-SubCell"/>
</dbReference>
<dbReference type="GO" id="GO:0003785">
    <property type="term" value="F:actin monomer binding"/>
    <property type="evidence" value="ECO:0007669"/>
    <property type="project" value="TreeGrafter"/>
</dbReference>
<dbReference type="GO" id="GO:0070064">
    <property type="term" value="F:proline-rich region binding"/>
    <property type="evidence" value="ECO:0007669"/>
    <property type="project" value="UniProtKB-ARBA"/>
</dbReference>
<dbReference type="GO" id="GO:0007097">
    <property type="term" value="P:nuclear migration"/>
    <property type="evidence" value="ECO:0007669"/>
    <property type="project" value="UniProtKB-ARBA"/>
</dbReference>
<dbReference type="GO" id="GO:0032956">
    <property type="term" value="P:regulation of actin cytoskeleton organization"/>
    <property type="evidence" value="ECO:0007669"/>
    <property type="project" value="UniProtKB-ARBA"/>
</dbReference>
<dbReference type="CDD" id="cd00148">
    <property type="entry name" value="PROF"/>
    <property type="match status" value="1"/>
</dbReference>
<dbReference type="FunFam" id="3.30.450.30:FF:000001">
    <property type="entry name" value="Profilin"/>
    <property type="match status" value="1"/>
</dbReference>
<dbReference type="Gene3D" id="3.30.450.30">
    <property type="entry name" value="Dynein light chain 2a, cytoplasmic"/>
    <property type="match status" value="1"/>
</dbReference>
<dbReference type="InterPro" id="IPR048278">
    <property type="entry name" value="PFN"/>
</dbReference>
<dbReference type="InterPro" id="IPR005455">
    <property type="entry name" value="PFN_euk"/>
</dbReference>
<dbReference type="InterPro" id="IPR036140">
    <property type="entry name" value="PFN_sf"/>
</dbReference>
<dbReference type="InterPro" id="IPR027310">
    <property type="entry name" value="Profilin_CS"/>
</dbReference>
<dbReference type="PANTHER" id="PTHR11604">
    <property type="entry name" value="PROFILIN"/>
    <property type="match status" value="1"/>
</dbReference>
<dbReference type="PANTHER" id="PTHR11604:SF51">
    <property type="entry name" value="PROFILIN-A"/>
    <property type="match status" value="1"/>
</dbReference>
<dbReference type="Pfam" id="PF00235">
    <property type="entry name" value="Profilin"/>
    <property type="match status" value="1"/>
</dbReference>
<dbReference type="PRINTS" id="PR00392">
    <property type="entry name" value="PROFILIN"/>
</dbReference>
<dbReference type="PRINTS" id="PR01640">
    <property type="entry name" value="PROFILINPLNT"/>
</dbReference>
<dbReference type="SMART" id="SM00392">
    <property type="entry name" value="PROF"/>
    <property type="match status" value="1"/>
</dbReference>
<dbReference type="SUPFAM" id="SSF55770">
    <property type="entry name" value="Profilin (actin-binding protein)"/>
    <property type="match status" value="1"/>
</dbReference>
<dbReference type="PROSITE" id="PS00414">
    <property type="entry name" value="PROFILIN"/>
    <property type="match status" value="1"/>
</dbReference>
<comment type="function">
    <text evidence="1">Binds to actin and affects the structure of the cytoskeleton. At high concentrations, profilin prevents the polymerization of actin, whereas it enhances it at low concentrations. By binding to PIP2, it inhibits the formation of IP3 and DG (By similarity).</text>
</comment>
<comment type="subunit">
    <text>Occurs in many kinds of cells as a complex with monomeric actin in a 1:1 ratio.</text>
</comment>
<comment type="subcellular location">
    <subcellularLocation>
        <location evidence="1">Cytoplasm</location>
        <location evidence="1">Cytoskeleton</location>
    </subcellularLocation>
</comment>
<comment type="allergen">
    <text evidence="2">Causes an allergic reaction in human.</text>
</comment>
<comment type="similarity">
    <text evidence="3">Belongs to the profilin family.</text>
</comment>